<accession>O43593</accession>
<accession>Q6GS30</accession>
<accession>Q96H33</accession>
<accession>Q9NPE1</accession>
<gene>
    <name type="primary">HR</name>
</gene>
<organism>
    <name type="scientific">Homo sapiens</name>
    <name type="common">Human</name>
    <dbReference type="NCBI Taxonomy" id="9606"/>
    <lineage>
        <taxon>Eukaryota</taxon>
        <taxon>Metazoa</taxon>
        <taxon>Chordata</taxon>
        <taxon>Craniata</taxon>
        <taxon>Vertebrata</taxon>
        <taxon>Euteleostomi</taxon>
        <taxon>Mammalia</taxon>
        <taxon>Eutheria</taxon>
        <taxon>Euarchontoglires</taxon>
        <taxon>Primates</taxon>
        <taxon>Haplorrhini</taxon>
        <taxon>Catarrhini</taxon>
        <taxon>Hominidae</taxon>
        <taxon>Homo</taxon>
    </lineage>
</organism>
<evidence type="ECO:0000250" key="1"/>
<evidence type="ECO:0000255" key="2">
    <source>
        <dbReference type="PROSITE-ProRule" id="PRU00538"/>
    </source>
</evidence>
<evidence type="ECO:0000256" key="3">
    <source>
        <dbReference type="SAM" id="MobiDB-lite"/>
    </source>
</evidence>
<evidence type="ECO:0000269" key="4">
    <source>
    </source>
</evidence>
<evidence type="ECO:0000269" key="5">
    <source>
    </source>
</evidence>
<evidence type="ECO:0000269" key="6">
    <source>
    </source>
</evidence>
<evidence type="ECO:0000269" key="7">
    <source>
    </source>
</evidence>
<evidence type="ECO:0000269" key="8">
    <source>
    </source>
</evidence>
<evidence type="ECO:0000269" key="9">
    <source>
    </source>
</evidence>
<evidence type="ECO:0000269" key="10">
    <source>
    </source>
</evidence>
<evidence type="ECO:0000269" key="11">
    <source>
    </source>
</evidence>
<evidence type="ECO:0000269" key="12">
    <source>
    </source>
</evidence>
<evidence type="ECO:0000269" key="13">
    <source>
    </source>
</evidence>
<evidence type="ECO:0000303" key="14">
    <source>
    </source>
</evidence>
<evidence type="ECO:0000305" key="15"/>
<proteinExistence type="evidence at protein level"/>
<name>HAIR_HUMAN</name>
<sequence length="1189" mass="127495">MESTPSFLKGTPTWEKTAPENGIVRQEPGSPPRDGLHHGPLCLGEPAPFWRGVLSTPDSWLPPGFPQGPKDMLPLVEGEGPQNGERKVNWLGSKEGLRWKEAMLTHPLAFCGPACPPRCGPLMPEHSGGHLKSDPVAFRPWHCPFLLETKILERAPFWVPTCLPPYLVSGLPPEHPCDWPLTPHPWVYSGGQPKVPSAFSLGSKGFYYKDPSIPRLAKEPLAAAEPGLFGLNSGGHLQRAGEAERPSLHQRDGEMGAGRQQNPCPLFLGQPDTVPWTSWPACPPGLVHTLGNVWAGPGDGNLGYQLGPPATPRCPSPEPPVTQRGCCSSYPPTKGGGLGPCGKCQEGLEGGASGASEPSEEVNKASGPRACPPSHHTKLKKTWLTRHSEQFECPRGCPEVEERPVARLRALKRAGSPEVQGAMGSPAPKRPPDPFPGTAEQGAGGWQEVRDTSIGNKDVDSGQHDEQKGPQDGQASLQDPGLQDIPCLALPAKLAQCQSCAQAAGEGGGHACHSQQVRRSPLGGELQQEEDTATNSSSEEGPGSGPDSRLSTGLAKHLLSGLGDRLCRLLRREREALAWAQREGQGPAVTEDSPGIPRCCSRCHHGLFNTHWRCPRCSHRLCVACGRVAGTGRAREKAGFQEQSAEECTQEAGHAACSLMLTQFVSSQALAELSTAMHQVWVKFDIRGHCPCQADARVWAPGDAGQQKESTQKTPPTPQPSCNGDTHRTKSIKEETPDSAETPAEDRAGRGPLPCPSLCELLASTAVKLCLGHERIHMAFAPVTPALPSDDRITNILDSIIAQVVERKIQEKALGPGLRAGPGLRKGLGLPLSPVRPRLPPPGALLWLQEPQPCPRRGFHLFQEHWRQGQPVLVSGIQRTLQGNLWGTEALGALGGQVQALSPLGPPQPSSLGSTTFWEGFSWPELRPKSDEGSVLLLHRALGDEDTSRVENLAASLPLPEYCALHGKLNLASYLPPGLALRPLEPQLWAAYGVSPHRGHLGTKNLCVEVADLVSILVHADTPLPAWHRAQKDFLSGLDGEGLWSPGSQVSTVWHVFRAQDAQRIRRFLQMVCPAGAGALEPGAPGSCYLDAGLRRRLREEWGVSCWTLLQAPGEAVLVPAGAPHQVQGLVSTVSVTQHFLSPETSALSAQLCHQGPSLPPDCHLLYAQMDWAVFQAVKVAVGTLQEAK</sequence>
<feature type="chain" id="PRO_0000083890" description="Lysine-specific demethylase hairless">
    <location>
        <begin position="1"/>
        <end position="1189"/>
    </location>
</feature>
<feature type="domain" description="JmjC" evidence="2">
    <location>
        <begin position="946"/>
        <end position="1157"/>
    </location>
</feature>
<feature type="zinc finger region" description="C6-type">
    <location>
        <begin position="600"/>
        <end position="625"/>
    </location>
</feature>
<feature type="region of interest" description="Disordered" evidence="3">
    <location>
        <begin position="1"/>
        <end position="40"/>
    </location>
</feature>
<feature type="region of interest" description="Disordered" evidence="3">
    <location>
        <begin position="236"/>
        <end position="257"/>
    </location>
</feature>
<feature type="region of interest" description="Disordered" evidence="3">
    <location>
        <begin position="349"/>
        <end position="377"/>
    </location>
</feature>
<feature type="region of interest" description="Disordered" evidence="3">
    <location>
        <begin position="414"/>
        <end position="480"/>
    </location>
</feature>
<feature type="region of interest" description="Disordered" evidence="3">
    <location>
        <begin position="505"/>
        <end position="552"/>
    </location>
</feature>
<feature type="region of interest" description="Disordered" evidence="3">
    <location>
        <begin position="702"/>
        <end position="750"/>
    </location>
</feature>
<feature type="short sequence motif" description="LXXLL motif 1">
    <location>
        <begin position="566"/>
        <end position="570"/>
    </location>
</feature>
<feature type="short sequence motif" description="LXXLL motif 2">
    <location>
        <begin position="758"/>
        <end position="762"/>
    </location>
</feature>
<feature type="compositionally biased region" description="Basic and acidic residues" evidence="3">
    <location>
        <begin position="239"/>
        <end position="254"/>
    </location>
</feature>
<feature type="compositionally biased region" description="Basic and acidic residues" evidence="3">
    <location>
        <begin position="457"/>
        <end position="469"/>
    </location>
</feature>
<feature type="compositionally biased region" description="Basic and acidic residues" evidence="3">
    <location>
        <begin position="725"/>
        <end position="736"/>
    </location>
</feature>
<feature type="binding site" evidence="2">
    <location>
        <position position="1007"/>
    </location>
    <ligand>
        <name>Fe cation</name>
        <dbReference type="ChEBI" id="CHEBI:24875"/>
        <note>catalytic</note>
    </ligand>
</feature>
<feature type="binding site" evidence="2">
    <location>
        <position position="1009"/>
    </location>
    <ligand>
        <name>Fe cation</name>
        <dbReference type="ChEBI" id="CHEBI:24875"/>
        <note>catalytic</note>
    </ligand>
</feature>
<feature type="binding site" evidence="2">
    <location>
        <position position="1125"/>
    </location>
    <ligand>
        <name>Fe cation</name>
        <dbReference type="ChEBI" id="CHEBI:24875"/>
        <note>catalytic</note>
    </ligand>
</feature>
<feature type="splice variant" id="VSP_004276" description="In isoform 2." evidence="14">
    <location>
        <begin position="1072"/>
        <end position="1126"/>
    </location>
</feature>
<feature type="sequence variant" id="VAR_027806" description="In dbSNP:rs12675375." evidence="4 11 12">
    <original>G</original>
    <variation>D</variation>
    <location>
        <position position="337"/>
    </location>
</feature>
<feature type="sequence variant" id="VAR_061664" description="In dbSNP:rs56140348.">
    <original>L</original>
    <variation>P</variation>
    <location>
        <position position="526"/>
    </location>
</feature>
<feature type="sequence variant" id="VAR_005265" description="In dbSNP:rs117197822." evidence="5 13">
    <original>R</original>
    <variation>Q</variation>
    <location>
        <position position="620"/>
    </location>
</feature>
<feature type="sequence variant" id="VAR_035927" description="In a colorectal cancer sample; somatic mutation." evidence="7">
    <original>R</original>
    <variation>Q</variation>
    <location>
        <position position="633"/>
    </location>
</feature>
<feature type="sequence variant" id="VAR_027807" description="In dbSNP:rs11990421.">
    <original>P</original>
    <variation>L</variation>
    <location>
        <position position="924"/>
    </location>
</feature>
<feature type="sequence variant" id="VAR_016222" description="In ALUNC; affects binding to thyroid hormone receptor; Markedly diminished histone demethylase activity; dbSNP:rs121434451." evidence="6 9">
    <original>D</original>
    <variation>N</variation>
    <location>
        <position position="1012"/>
    </location>
</feature>
<feature type="sequence variant" id="VAR_005266" description="In ALUNC; likely benign; dbSNP:rs7014851." evidence="11">
    <original>T</original>
    <variation>A</variation>
    <location>
        <position position="1022"/>
    </location>
</feature>
<feature type="sequence variant" id="VAR_005267" description="In ALUNC; dbSNP:rs121434448." evidence="12">
    <original>V</original>
    <variation>D</variation>
    <location>
        <position position="1136"/>
    </location>
</feature>
<feature type="mutagenesis site" description="Markedly diminishes histone demethylase activity." evidence="9">
    <original>V</original>
    <variation>M</variation>
    <location>
        <position position="1056"/>
    </location>
</feature>
<reference key="1">
    <citation type="journal article" date="1998" name="Science">
        <title>Alopecia universalis associated with a mutation in the human hairless gene.</title>
        <authorList>
            <person name="Ahmad W."/>
            <person name="ul Haque M.F."/>
            <person name="Brancolini V."/>
            <person name="Tsou H.C."/>
            <person name="Ul Haque S."/>
            <person name="Lam H."/>
            <person name="Aita V.M."/>
            <person name="Owen J."/>
            <person name="Deblaquiere M."/>
            <person name="Frank J."/>
            <person name="Cserhalmi-Friedman P.B."/>
            <person name="Leask A."/>
            <person name="McGrath J.A."/>
            <person name="Peacocke M."/>
            <person name="Ahmad M."/>
            <person name="Ott J."/>
            <person name="Christiano A.M."/>
        </authorList>
    </citation>
    <scope>NUCLEOTIDE SEQUENCE [MRNA] (ISOFORM 1)</scope>
    <scope>VARIANT ASP-337</scope>
    <scope>VARIANT ALUNC ALA-1022</scope>
</reference>
<reference key="2">
    <citation type="journal article" date="1999" name="Genomics">
        <title>Genomic organization of the human hairless gene (HR) and identification of a mutation underlying congenital atrichia in an Arab Palestinian family.</title>
        <authorList>
            <person name="Ahmad W."/>
            <person name="Zlotogorski A."/>
            <person name="Panteleyev A.A."/>
            <person name="Lam H."/>
            <person name="Ahmad M."/>
            <person name="ul Haque M.F."/>
            <person name="Abdallah H.M."/>
            <person name="Dragan L."/>
            <person name="Christiano A.M."/>
        </authorList>
    </citation>
    <scope>NUCLEOTIDE SEQUENCE [MRNA] (ISOFORM 1)</scope>
    <scope>SEQUENCE REVISION TO 572 AND 774</scope>
    <scope>TISSUE SPECIFICITY</scope>
    <scope>VARIANT ASP-337</scope>
    <source>
        <tissue>Peripheral blood leukocyte</tissue>
        <tissue>Skin fibroblast</tissue>
    </source>
</reference>
<reference key="3">
    <citation type="submission" date="2002-04" db="EMBL/GenBank/DDBJ databases">
        <authorList>
            <person name="Christiano A.M."/>
        </authorList>
    </citation>
    <scope>SEQUENCE REVISION TO 446 AND 584</scope>
</reference>
<reference key="4">
    <citation type="journal article" date="1998" name="Hum. Mol. Genet.">
        <title>Cloning, genomic organization, alternative transcripts and mutational analysis of the gene responsible for autosomal recessive universal congenital alopecia.</title>
        <authorList>
            <person name="Cichon S."/>
            <person name="Anker M."/>
            <person name="Vogt I.R."/>
            <person name="Rohleder H."/>
            <person name="Putzstuck M."/>
            <person name="Hillmer A."/>
            <person name="Farooq S.A."/>
            <person name="Al-Dhafri K.S."/>
            <person name="Ahmad M."/>
            <person name="Haque S."/>
            <person name="Rietschel M."/>
            <person name="Propping P."/>
            <person name="Kruse R."/>
            <person name="Noethen M.M."/>
        </authorList>
    </citation>
    <scope>NUCLEOTIDE SEQUENCE [GENOMIC DNA / MRNA] (ISOFORMS 1 AND 2)</scope>
    <scope>VARIANT ASP-337</scope>
    <scope>VARIANT ALUNC ASP-1136</scope>
    <scope>TISSUE SPECIFICITY</scope>
    <source>
        <tissue>Brain</tissue>
        <tissue>Fetal brain</tissue>
        <tissue>Peripheral blood leukocyte</tissue>
    </source>
</reference>
<reference key="5">
    <citation type="journal article" date="2004" name="Genome Res.">
        <title>The status, quality, and expansion of the NIH full-length cDNA project: the Mammalian Gene Collection (MGC).</title>
        <authorList>
            <consortium name="The MGC Project Team"/>
        </authorList>
    </citation>
    <scope>NUCLEOTIDE SEQUENCE [LARGE SCALE MRNA] (ISOFORM 1)</scope>
    <source>
        <tissue>Eye</tissue>
    </source>
</reference>
<reference key="6">
    <citation type="journal article" date="2009" name="Nat. Genet.">
        <title>Loss-of-function mutations of an inhibitory upstream ORF in the human hairless transcript cause Marie Unna hereditary hypotrichosis.</title>
        <authorList>
            <person name="Wen Y."/>
            <person name="Liu Y."/>
            <person name="Xu Y."/>
            <person name="Zhao Y."/>
            <person name="Hua R."/>
            <person name="Wang K."/>
            <person name="Sun M."/>
            <person name="Li Y."/>
            <person name="Yang S."/>
            <person name="Zhang X.J."/>
            <person name="Kruse R."/>
            <person name="Cichon S."/>
            <person name="Betz R.C."/>
            <person name="Nothen M.M."/>
            <person name="van Steensel M.A."/>
            <person name="van Geel M."/>
            <person name="Steijlen P.M."/>
            <person name="Hohl D."/>
            <person name="Huber M."/>
            <person name="Dunnill G.S."/>
            <person name="Kennedy C."/>
            <person name="Messenger A."/>
            <person name="Munro C.S."/>
            <person name="Terrinoni A."/>
            <person name="Hovnanian A."/>
            <person name="Bodemer C."/>
            <person name="de Prost Y."/>
            <person name="Paller A.S."/>
            <person name="Irvine A.D."/>
            <person name="Sinclair R."/>
            <person name="Green J."/>
            <person name="Shang D."/>
            <person name="Liu Q."/>
            <person name="Luo Y."/>
            <person name="Jiang L."/>
            <person name="Chen H.D."/>
            <person name="Lo W.H."/>
            <person name="McLean W.H."/>
            <person name="He C.D."/>
            <person name="Zhang X."/>
        </authorList>
    </citation>
    <scope>INVOLVEMENT IN HYPT4</scope>
</reference>
<reference key="7">
    <citation type="journal article" date="2014" name="FASEB J.">
        <title>Hairless is a histone H3K9 demethylase.</title>
        <authorList>
            <person name="Liu L."/>
            <person name="Kim H."/>
            <person name="Casta A."/>
            <person name="Kobayashi Y."/>
            <person name="Shapiro L.S."/>
            <person name="Christiano A.M."/>
        </authorList>
    </citation>
    <scope>FUNCTION</scope>
    <scope>CATALYTIC ACTIVITY</scope>
    <scope>CHARACTERIZATION OF VARIANT ALUNC ASN-1012</scope>
    <scope>MUTAGENESIS OF VAL-1056</scope>
</reference>
<reference key="8">
    <citation type="journal article" date="1998" name="Am. J. Hum. Genet.">
        <title>A missense mutation in the zinc-finger domain of the human hairless gene underlies congenital atrichia in a family of Irish travellers.</title>
        <authorList>
            <person name="Ahmad W."/>
            <person name="Irvine A.D."/>
            <person name="Lam H."/>
            <person name="Buckley C."/>
            <person name="Bingham E.A."/>
            <person name="Panteleyev A.A."/>
            <person name="Ahmad M."/>
            <person name="McGrath J.A."/>
            <person name="Christiano A.M."/>
        </authorList>
    </citation>
    <scope>VARIANT GLN-620</scope>
</reference>
<reference key="9">
    <citation type="journal article" date="2001" name="Am. J. Hum. Genet.">
        <title>Variant 1859G--&gt;A (Arg620Gln) of the 'hairless' gene: absence of association with papular atrichia or androgenic alopecia.</title>
        <authorList>
            <person name="Hillmer A.M."/>
            <person name="Kruse R."/>
            <person name="Betz R.C."/>
            <person name="Schumacher J."/>
            <person name="Heyn U."/>
            <person name="Propping P."/>
            <person name="Noethen M.M."/>
            <person name="Cichon S."/>
        </authorList>
    </citation>
    <scope>VARIANT GLN-620</scope>
</reference>
<reference key="10">
    <citation type="journal article" date="2002" name="J. Invest. Dermatol.">
        <title>A novel missense mutation affecting the human hairless thyroid receptor interacting domain 2 causes congenital atrichia.</title>
        <authorList>
            <person name="Klein I."/>
            <person name="Bergman R."/>
            <person name="Indelman M."/>
            <person name="Sprecher E."/>
        </authorList>
    </citation>
    <scope>VARIANT ALUNC ASN-1012</scope>
</reference>
<reference key="11">
    <citation type="journal article" date="2006" name="Science">
        <title>The consensus coding sequences of human breast and colorectal cancers.</title>
        <authorList>
            <person name="Sjoeblom T."/>
            <person name="Jones S."/>
            <person name="Wood L.D."/>
            <person name="Parsons D.W."/>
            <person name="Lin J."/>
            <person name="Barber T.D."/>
            <person name="Mandelker D."/>
            <person name="Leary R.J."/>
            <person name="Ptak J."/>
            <person name="Silliman N."/>
            <person name="Szabo S."/>
            <person name="Buckhaults P."/>
            <person name="Farrell C."/>
            <person name="Meeh P."/>
            <person name="Markowitz S.D."/>
            <person name="Willis J."/>
            <person name="Dawson D."/>
            <person name="Willson J.K.V."/>
            <person name="Gazdar A.F."/>
            <person name="Hartigan J."/>
            <person name="Wu L."/>
            <person name="Liu C."/>
            <person name="Parmigiani G."/>
            <person name="Park B.H."/>
            <person name="Bachman K.E."/>
            <person name="Papadopoulos N."/>
            <person name="Vogelstein B."/>
            <person name="Kinzler K.W."/>
            <person name="Velculescu V.E."/>
        </authorList>
    </citation>
    <scope>VARIANT [LARGE SCALE ANALYSIS] GLN-633</scope>
</reference>
<reference key="12">
    <citation type="journal article" date="2014" name="Int. J. Dermatol.">
        <title>Identification of a novel U2HR mutation in a Korean woman with Marie Unna hereditary hypotrichosis.</title>
        <authorList>
            <person name="Yun S.K."/>
            <person name="Cho Y.G."/>
            <person name="Song K.H."/>
            <person name="Hwang S.R."/>
            <person name="Kim Yoon S.J."/>
            <person name="Choi K.W."/>
            <person name="Kim H.U."/>
            <person name="Park J."/>
        </authorList>
    </citation>
    <scope>INVOLVEMENT IN HYPT4</scope>
</reference>
<keyword id="KW-0025">Alternative splicing</keyword>
<keyword id="KW-0225">Disease variant</keyword>
<keyword id="KW-0238">DNA-binding</keyword>
<keyword id="KW-1063">Hypotrichosis</keyword>
<keyword id="KW-0408">Iron</keyword>
<keyword id="KW-0479">Metal-binding</keyword>
<keyword id="KW-0539">Nucleus</keyword>
<keyword id="KW-0560">Oxidoreductase</keyword>
<keyword id="KW-1267">Proteomics identification</keyword>
<keyword id="KW-1185">Reference proteome</keyword>
<keyword id="KW-0804">Transcription</keyword>
<keyword id="KW-0805">Transcription regulation</keyword>
<keyword id="KW-0862">Zinc</keyword>
<keyword id="KW-0863">Zinc-finger</keyword>
<dbReference type="EC" id="1.14.11.65" evidence="9"/>
<dbReference type="EMBL" id="AF039196">
    <property type="protein sequence ID" value="AAC32258.3"/>
    <property type="molecule type" value="mRNA"/>
</dbReference>
<dbReference type="EMBL" id="AJ277249">
    <property type="protein sequence ID" value="CAB87577.2"/>
    <property type="molecule type" value="Genomic_DNA"/>
</dbReference>
<dbReference type="EMBL" id="AJ277250">
    <property type="protein sequence ID" value="CAB87577.2"/>
    <property type="status" value="JOINED"/>
    <property type="molecule type" value="Genomic_DNA"/>
</dbReference>
<dbReference type="EMBL" id="AJ277251">
    <property type="protein sequence ID" value="CAB87577.2"/>
    <property type="status" value="JOINED"/>
    <property type="molecule type" value="Genomic_DNA"/>
</dbReference>
<dbReference type="EMBL" id="AJ277252">
    <property type="protein sequence ID" value="CAB87577.2"/>
    <property type="status" value="JOINED"/>
    <property type="molecule type" value="Genomic_DNA"/>
</dbReference>
<dbReference type="EMBL" id="AJ277253">
    <property type="protein sequence ID" value="CAB87577.2"/>
    <property type="status" value="JOINED"/>
    <property type="molecule type" value="Genomic_DNA"/>
</dbReference>
<dbReference type="EMBL" id="AJ400825">
    <property type="protein sequence ID" value="CAB87577.2"/>
    <property type="status" value="JOINED"/>
    <property type="molecule type" value="Genomic_DNA"/>
</dbReference>
<dbReference type="EMBL" id="AJ400826">
    <property type="protein sequence ID" value="CAB87577.2"/>
    <property type="status" value="JOINED"/>
    <property type="molecule type" value="Genomic_DNA"/>
</dbReference>
<dbReference type="EMBL" id="AJ400827">
    <property type="protein sequence ID" value="CAB87577.2"/>
    <property type="status" value="JOINED"/>
    <property type="molecule type" value="Genomic_DNA"/>
</dbReference>
<dbReference type="EMBL" id="AJ400828">
    <property type="protein sequence ID" value="CAB87577.2"/>
    <property type="status" value="JOINED"/>
    <property type="molecule type" value="Genomic_DNA"/>
</dbReference>
<dbReference type="EMBL" id="AJ400829">
    <property type="protein sequence ID" value="CAB87577.2"/>
    <property type="status" value="JOINED"/>
    <property type="molecule type" value="Genomic_DNA"/>
</dbReference>
<dbReference type="EMBL" id="AJ400830">
    <property type="protein sequence ID" value="CAB87577.2"/>
    <property type="status" value="JOINED"/>
    <property type="molecule type" value="Genomic_DNA"/>
</dbReference>
<dbReference type="EMBL" id="AJ400831">
    <property type="protein sequence ID" value="CAB87577.2"/>
    <property type="status" value="JOINED"/>
    <property type="molecule type" value="Genomic_DNA"/>
</dbReference>
<dbReference type="EMBL" id="AJ400832">
    <property type="protein sequence ID" value="CAB87577.2"/>
    <property type="status" value="JOINED"/>
    <property type="molecule type" value="Genomic_DNA"/>
</dbReference>
<dbReference type="EMBL" id="AJ400833">
    <property type="protein sequence ID" value="CAB87577.2"/>
    <property type="status" value="JOINED"/>
    <property type="molecule type" value="Genomic_DNA"/>
</dbReference>
<dbReference type="EMBL" id="AJ400834">
    <property type="protein sequence ID" value="CAB87577.2"/>
    <property type="status" value="JOINED"/>
    <property type="molecule type" value="Genomic_DNA"/>
</dbReference>
<dbReference type="EMBL" id="AJ400835">
    <property type="protein sequence ID" value="CAB87577.2"/>
    <property type="status" value="JOINED"/>
    <property type="molecule type" value="Genomic_DNA"/>
</dbReference>
<dbReference type="EMBL" id="AJ400836">
    <property type="protein sequence ID" value="CAB87577.2"/>
    <property type="status" value="JOINED"/>
    <property type="molecule type" value="Genomic_DNA"/>
</dbReference>
<dbReference type="EMBL" id="AJ400837">
    <property type="protein sequence ID" value="CAB87577.2"/>
    <property type="status" value="JOINED"/>
    <property type="molecule type" value="Genomic_DNA"/>
</dbReference>
<dbReference type="EMBL" id="AJ277165">
    <property type="protein sequence ID" value="CAB86602.1"/>
    <property type="molecule type" value="mRNA"/>
</dbReference>
<dbReference type="EMBL" id="BC067128">
    <property type="protein sequence ID" value="AAH67128.1"/>
    <property type="molecule type" value="mRNA"/>
</dbReference>
<dbReference type="CCDS" id="CCDS6022.1">
    <molecule id="O43593-1"/>
</dbReference>
<dbReference type="CCDS" id="CCDS6023.1">
    <molecule id="O43593-2"/>
</dbReference>
<dbReference type="RefSeq" id="NP_005135.2">
    <molecule id="O43593-1"/>
    <property type="nucleotide sequence ID" value="NM_005144.4"/>
</dbReference>
<dbReference type="RefSeq" id="NP_060881.2">
    <molecule id="O43593-2"/>
    <property type="nucleotide sequence ID" value="NM_018411.4"/>
</dbReference>
<dbReference type="SMR" id="O43593"/>
<dbReference type="BioGRID" id="120917">
    <property type="interactions" value="48"/>
</dbReference>
<dbReference type="ELM" id="O43593"/>
<dbReference type="FunCoup" id="O43593">
    <property type="interactions" value="519"/>
</dbReference>
<dbReference type="IntAct" id="O43593">
    <property type="interactions" value="37"/>
</dbReference>
<dbReference type="MINT" id="O43593"/>
<dbReference type="STRING" id="9606.ENSP00000370826"/>
<dbReference type="GlyGen" id="O43593">
    <property type="glycosylation" value="1 site"/>
</dbReference>
<dbReference type="iPTMnet" id="O43593"/>
<dbReference type="PhosphoSitePlus" id="O43593"/>
<dbReference type="BioMuta" id="HR"/>
<dbReference type="jPOST" id="O43593"/>
<dbReference type="MassIVE" id="O43593"/>
<dbReference type="PaxDb" id="9606-ENSP00000370826"/>
<dbReference type="PeptideAtlas" id="O43593"/>
<dbReference type="ProteomicsDB" id="49067">
    <molecule id="O43593-1"/>
</dbReference>
<dbReference type="ProteomicsDB" id="49068">
    <molecule id="O43593-2"/>
</dbReference>
<dbReference type="Antibodypedia" id="9297">
    <property type="antibodies" value="201 antibodies from 27 providers"/>
</dbReference>
<dbReference type="DNASU" id="55806"/>
<dbReference type="Ensembl" id="ENST00000312841.9">
    <molecule id="O43593-2"/>
    <property type="protein sequence ID" value="ENSP00000326765.8"/>
    <property type="gene ID" value="ENSG00000168453.16"/>
</dbReference>
<dbReference type="Ensembl" id="ENST00000381418.9">
    <molecule id="O43593-1"/>
    <property type="protein sequence ID" value="ENSP00000370826.4"/>
    <property type="gene ID" value="ENSG00000168453.16"/>
</dbReference>
<dbReference type="Ensembl" id="ENST00000680789.1">
    <molecule id="O43593-1"/>
    <property type="protein sequence ID" value="ENSP00000505181.1"/>
    <property type="gene ID" value="ENSG00000168453.16"/>
</dbReference>
<dbReference type="GeneID" id="55806"/>
<dbReference type="KEGG" id="hsa:55806"/>
<dbReference type="MANE-Select" id="ENST00000381418.9">
    <property type="protein sequence ID" value="ENSP00000370826.4"/>
    <property type="RefSeq nucleotide sequence ID" value="NM_005144.5"/>
    <property type="RefSeq protein sequence ID" value="NP_005135.2"/>
</dbReference>
<dbReference type="UCSC" id="uc003xas.4">
    <molecule id="O43593-1"/>
    <property type="organism name" value="human"/>
</dbReference>
<dbReference type="AGR" id="HGNC:5172"/>
<dbReference type="CTD" id="55806"/>
<dbReference type="DisGeNET" id="55806"/>
<dbReference type="GeneCards" id="HR"/>
<dbReference type="HGNC" id="HGNC:5172">
    <property type="gene designation" value="HR"/>
</dbReference>
<dbReference type="HPA" id="ENSG00000168453">
    <property type="expression patterns" value="Tissue enhanced (brain, skin)"/>
</dbReference>
<dbReference type="MalaCards" id="HR"/>
<dbReference type="MIM" id="146550">
    <property type="type" value="phenotype"/>
</dbReference>
<dbReference type="MIM" id="203655">
    <property type="type" value="phenotype"/>
</dbReference>
<dbReference type="MIM" id="209500">
    <property type="type" value="phenotype"/>
</dbReference>
<dbReference type="MIM" id="602302">
    <property type="type" value="gene"/>
</dbReference>
<dbReference type="neXtProt" id="NX_O43593"/>
<dbReference type="OpenTargets" id="ENSG00000168453"/>
<dbReference type="Orphanet" id="701">
    <property type="disease" value="Alopecia universalis"/>
</dbReference>
<dbReference type="Orphanet" id="86819">
    <property type="disease" value="Atrichia with papular lesions"/>
</dbReference>
<dbReference type="Orphanet" id="444">
    <property type="disease" value="Marie Unna hereditary hypotrichosis"/>
</dbReference>
<dbReference type="PharmGKB" id="PA29443"/>
<dbReference type="VEuPathDB" id="HostDB:ENSG00000168453"/>
<dbReference type="eggNOG" id="KOG1356">
    <property type="taxonomic scope" value="Eukaryota"/>
</dbReference>
<dbReference type="GeneTree" id="ENSGT00940000161687"/>
<dbReference type="HOGENOM" id="CLU_294677_0_0_1"/>
<dbReference type="InParanoid" id="O43593"/>
<dbReference type="OMA" id="VCPPHYG"/>
<dbReference type="OrthoDB" id="1667110at2759"/>
<dbReference type="PAN-GO" id="O43593">
    <property type="GO annotations" value="7 GO annotations based on evolutionary models"/>
</dbReference>
<dbReference type="PhylomeDB" id="O43593"/>
<dbReference type="TreeFam" id="TF324723"/>
<dbReference type="BioCyc" id="MetaCyc:ENSG00000168453-MONOMER"/>
<dbReference type="BRENDA" id="1.14.11.65">
    <property type="organism ID" value="2681"/>
</dbReference>
<dbReference type="PathwayCommons" id="O43593"/>
<dbReference type="SignaLink" id="O43593"/>
<dbReference type="SIGNOR" id="O43593"/>
<dbReference type="BioGRID-ORCS" id="55806">
    <property type="hits" value="14 hits in 1166 CRISPR screens"/>
</dbReference>
<dbReference type="GeneWiki" id="HR_(gene)"/>
<dbReference type="GenomeRNAi" id="55806"/>
<dbReference type="Pharos" id="O43593">
    <property type="development level" value="Tbio"/>
</dbReference>
<dbReference type="PRO" id="PR:O43593"/>
<dbReference type="Proteomes" id="UP000005640">
    <property type="component" value="Chromosome 8"/>
</dbReference>
<dbReference type="RNAct" id="O43593">
    <property type="molecule type" value="protein"/>
</dbReference>
<dbReference type="Bgee" id="ENSG00000168453">
    <property type="expression patterns" value="Expressed in skin of abdomen and 170 other cell types or tissues"/>
</dbReference>
<dbReference type="ExpressionAtlas" id="O43593">
    <property type="expression patterns" value="baseline and differential"/>
</dbReference>
<dbReference type="GO" id="GO:0000785">
    <property type="term" value="C:chromatin"/>
    <property type="evidence" value="ECO:0000318"/>
    <property type="project" value="GO_Central"/>
</dbReference>
<dbReference type="GO" id="GO:0000118">
    <property type="term" value="C:histone deacetylase complex"/>
    <property type="evidence" value="ECO:0000318"/>
    <property type="project" value="GO_Central"/>
</dbReference>
<dbReference type="GO" id="GO:0016604">
    <property type="term" value="C:nuclear body"/>
    <property type="evidence" value="ECO:0007669"/>
    <property type="project" value="Ensembl"/>
</dbReference>
<dbReference type="GO" id="GO:0005654">
    <property type="term" value="C:nucleoplasm"/>
    <property type="evidence" value="ECO:0000314"/>
    <property type="project" value="HPA"/>
</dbReference>
<dbReference type="GO" id="GO:0031490">
    <property type="term" value="F:chromatin DNA binding"/>
    <property type="evidence" value="ECO:0000318"/>
    <property type="project" value="GO_Central"/>
</dbReference>
<dbReference type="GO" id="GO:0032454">
    <property type="term" value="F:histone H3K9 demethylase activity"/>
    <property type="evidence" value="ECO:0000318"/>
    <property type="project" value="GO_Central"/>
</dbReference>
<dbReference type="GO" id="GO:0140683">
    <property type="term" value="F:histone H3K9me/H3K9me2 demethylase activity"/>
    <property type="evidence" value="ECO:0007669"/>
    <property type="project" value="UniProtKB-EC"/>
</dbReference>
<dbReference type="GO" id="GO:0003712">
    <property type="term" value="F:transcription coregulator activity"/>
    <property type="evidence" value="ECO:0000318"/>
    <property type="project" value="GO_Central"/>
</dbReference>
<dbReference type="GO" id="GO:0003714">
    <property type="term" value="F:transcription corepressor activity"/>
    <property type="evidence" value="ECO:0007669"/>
    <property type="project" value="Ensembl"/>
</dbReference>
<dbReference type="GO" id="GO:0008270">
    <property type="term" value="F:zinc ion binding"/>
    <property type="evidence" value="ECO:0007669"/>
    <property type="project" value="UniProtKB-KW"/>
</dbReference>
<dbReference type="GO" id="GO:0006357">
    <property type="term" value="P:regulation of transcription by RNA polymerase II"/>
    <property type="evidence" value="ECO:0000318"/>
    <property type="project" value="GO_Central"/>
</dbReference>
<dbReference type="FunFam" id="2.60.120.650:FF:000017">
    <property type="entry name" value="lysine-specific demethylase hairless isoform X1"/>
    <property type="match status" value="1"/>
</dbReference>
<dbReference type="Gene3D" id="2.60.120.650">
    <property type="entry name" value="Cupin"/>
    <property type="match status" value="1"/>
</dbReference>
<dbReference type="InterPro" id="IPR045109">
    <property type="entry name" value="JHDM2-like"/>
</dbReference>
<dbReference type="InterPro" id="IPR003347">
    <property type="entry name" value="JmjC_dom"/>
</dbReference>
<dbReference type="PANTHER" id="PTHR12549">
    <property type="entry name" value="JMJC DOMAIN-CONTAINING HISTONE DEMETHYLATION PROTEIN"/>
    <property type="match status" value="1"/>
</dbReference>
<dbReference type="PANTHER" id="PTHR12549:SF4">
    <property type="entry name" value="LYSINE-SPECIFIC DEMETHYLASE HAIRLESS"/>
    <property type="match status" value="1"/>
</dbReference>
<dbReference type="Pfam" id="PF02373">
    <property type="entry name" value="JmjC"/>
    <property type="match status" value="1"/>
</dbReference>
<dbReference type="SMART" id="SM00558">
    <property type="entry name" value="JmjC"/>
    <property type="match status" value="1"/>
</dbReference>
<dbReference type="SUPFAM" id="SSF51197">
    <property type="entry name" value="Clavaminate synthase-like"/>
    <property type="match status" value="1"/>
</dbReference>
<dbReference type="PROSITE" id="PS51184">
    <property type="entry name" value="JMJC"/>
    <property type="match status" value="1"/>
</dbReference>
<comment type="function">
    <text evidence="9">Histone demethylase that specifically demethylates both mono- and dimethylated 'Lys-9' of histone H3. May act as a transcription regulator controlling hair biology (via targeting of collagens), neural activity, and cell cycle.</text>
</comment>
<comment type="catalytic activity">
    <reaction evidence="9">
        <text>N(6),N(6)-dimethyl-L-lysyl(9)-[histone H3] + 2 2-oxoglutarate + 2 O2 = L-lysyl(9)-[histone H3] + 2 formaldehyde + 2 succinate + 2 CO2</text>
        <dbReference type="Rhea" id="RHEA:60188"/>
        <dbReference type="Rhea" id="RHEA-COMP:15541"/>
        <dbReference type="Rhea" id="RHEA-COMP:15546"/>
        <dbReference type="ChEBI" id="CHEBI:15379"/>
        <dbReference type="ChEBI" id="CHEBI:16526"/>
        <dbReference type="ChEBI" id="CHEBI:16810"/>
        <dbReference type="ChEBI" id="CHEBI:16842"/>
        <dbReference type="ChEBI" id="CHEBI:29969"/>
        <dbReference type="ChEBI" id="CHEBI:30031"/>
        <dbReference type="ChEBI" id="CHEBI:61976"/>
        <dbReference type="EC" id="1.14.11.65"/>
    </reaction>
</comment>
<comment type="cofactor">
    <cofactor evidence="1">
        <name>Fe(2+)</name>
        <dbReference type="ChEBI" id="CHEBI:29033"/>
    </cofactor>
    <text evidence="1">Binds 1 Fe(2+) ion per subunit.</text>
</comment>
<comment type="interaction">
    <interactant intactId="EBI-2880706">
        <id>O43593</id>
    </interactant>
    <interactant intactId="EBI-12318443">
        <id>Q8NFV4-4</id>
        <label>ABHD11</label>
    </interactant>
    <organismsDiffer>false</organismsDiffer>
    <experiments>3</experiments>
</comment>
<comment type="interaction">
    <interactant intactId="EBI-2880706">
        <id>O43593</id>
    </interactant>
    <interactant intactId="EBI-11976299">
        <id>Q5BKX5-3</id>
        <label>ACTMAP</label>
    </interactant>
    <organismsDiffer>false</organismsDiffer>
    <experiments>3</experiments>
</comment>
<comment type="interaction">
    <interactant intactId="EBI-2880706">
        <id>O43593</id>
    </interactant>
    <interactant intactId="EBI-12823597">
        <id>Q9Y4X0-3</id>
        <label>AMMECR1</label>
    </interactant>
    <organismsDiffer>false</organismsDiffer>
    <experiments>3</experiments>
</comment>
<comment type="interaction">
    <interactant intactId="EBI-2880706">
        <id>O43593</id>
    </interactant>
    <interactant intactId="EBI-12811889">
        <id>Q9Y6H3</id>
        <label>ATP23</label>
    </interactant>
    <organismsDiffer>false</organismsDiffer>
    <experiments>3</experiments>
</comment>
<comment type="interaction">
    <interactant intactId="EBI-2880706">
        <id>O43593</id>
    </interactant>
    <interactant intactId="EBI-718615">
        <id>Q9H5F2</id>
        <label>CFAP68</label>
    </interactant>
    <organismsDiffer>false</organismsDiffer>
    <experiments>3</experiments>
</comment>
<comment type="interaction">
    <interactant intactId="EBI-2880706">
        <id>O43593</id>
    </interactant>
    <interactant intactId="EBI-12819063">
        <id>Q9BYD5</id>
        <label>CNFN</label>
    </interactant>
    <organismsDiffer>false</organismsDiffer>
    <experiments>3</experiments>
</comment>
<comment type="interaction">
    <interactant intactId="EBI-2880706">
        <id>O43593</id>
    </interactant>
    <interactant intactId="EBI-3867333">
        <id>A8MQ03</id>
        <label>CYSRT1</label>
    </interactant>
    <organismsDiffer>false</organismsDiffer>
    <experiments>3</experiments>
</comment>
<comment type="interaction">
    <interactant intactId="EBI-2880706">
        <id>O43593</id>
    </interactant>
    <interactant intactId="EBI-11978259">
        <id>Q92567-2</id>
        <label>FAM168A</label>
    </interactant>
    <organismsDiffer>false</organismsDiffer>
    <experiments>3</experiments>
</comment>
<comment type="interaction">
    <interactant intactId="EBI-2880706">
        <id>O43593</id>
    </interactant>
    <interactant intactId="EBI-356700">
        <id>P57678</id>
        <label>GEMIN4</label>
    </interactant>
    <organismsDiffer>false</organismsDiffer>
    <experiments>3</experiments>
</comment>
<comment type="interaction">
    <interactant intactId="EBI-2880706">
        <id>O43593</id>
    </interactant>
    <interactant intactId="EBI-740785">
        <id>P49639</id>
        <label>HOXA1</label>
    </interactant>
    <organismsDiffer>false</organismsDiffer>
    <experiments>3</experiments>
</comment>
<comment type="interaction">
    <interactant intactId="EBI-2880706">
        <id>O43593</id>
    </interactant>
    <interactant intactId="EBI-6509505">
        <id>Q0VD86</id>
        <label>INCA1</label>
    </interactant>
    <organismsDiffer>false</organismsDiffer>
    <experiments>3</experiments>
</comment>
<comment type="interaction">
    <interactant intactId="EBI-2880706">
        <id>O43593</id>
    </interactant>
    <interactant intactId="EBI-10693436">
        <id>Q9BS75</id>
        <label>KLHL20</label>
    </interactant>
    <organismsDiffer>false</organismsDiffer>
    <experiments>3</experiments>
</comment>
<comment type="interaction">
    <interactant intactId="EBI-2880706">
        <id>O43593</id>
    </interactant>
    <interactant intactId="EBI-1052037">
        <id>Q8IUC1</id>
        <label>KRTAP11-1</label>
    </interactant>
    <organismsDiffer>false</organismsDiffer>
    <experiments>3</experiments>
</comment>
<comment type="interaction">
    <interactant intactId="EBI-2880706">
        <id>O43593</id>
    </interactant>
    <interactant intactId="EBI-11953846">
        <id>Q52LG2</id>
        <label>KRTAP13-2</label>
    </interactant>
    <organismsDiffer>false</organismsDiffer>
    <experiments>3</experiments>
</comment>
<comment type="interaction">
    <interactant intactId="EBI-2880706">
        <id>O43593</id>
    </interactant>
    <interactant intactId="EBI-11992140">
        <id>Q3LI76</id>
        <label>KRTAP15-1</label>
    </interactant>
    <organismsDiffer>false</organismsDiffer>
    <experiments>3</experiments>
</comment>
<comment type="interaction">
    <interactant intactId="EBI-2880706">
        <id>O43593</id>
    </interactant>
    <interactant intactId="EBI-9996449">
        <id>Q9BYR8</id>
        <label>KRTAP3-1</label>
    </interactant>
    <organismsDiffer>false</organismsDiffer>
    <experiments>3</experiments>
</comment>
<comment type="interaction">
    <interactant intactId="EBI-2880706">
        <id>O43593</id>
    </interactant>
    <interactant intactId="EBI-3957694">
        <id>Q9BYR6</id>
        <label>KRTAP3-3</label>
    </interactant>
    <organismsDiffer>false</organismsDiffer>
    <experiments>3</experiments>
</comment>
<comment type="interaction">
    <interactant intactId="EBI-2880706">
        <id>O43593</id>
    </interactant>
    <interactant intactId="EBI-22311199">
        <id>Q3LI67</id>
        <label>KRTAP6-3</label>
    </interactant>
    <organismsDiffer>false</organismsDiffer>
    <experiments>3</experiments>
</comment>
<comment type="interaction">
    <interactant intactId="EBI-2880706">
        <id>O43593</id>
    </interactant>
    <interactant intactId="EBI-726466">
        <id>O15496</id>
        <label>PLA2G10</label>
    </interactant>
    <organismsDiffer>false</organismsDiffer>
    <experiments>3</experiments>
</comment>
<comment type="interaction">
    <interactant intactId="EBI-2880706">
        <id>O43593</id>
    </interactant>
    <interactant intactId="EBI-12806054">
        <id>P10745</id>
        <label>RBP3</label>
    </interactant>
    <organismsDiffer>false</organismsDiffer>
    <experiments>3</experiments>
</comment>
<comment type="interaction">
    <interactant intactId="EBI-2880706">
        <id>O43593</id>
    </interactant>
    <interactant intactId="EBI-11959123">
        <id>Q99932-2</id>
        <label>SPAG8</label>
    </interactant>
    <organismsDiffer>false</organismsDiffer>
    <experiments>3</experiments>
</comment>
<comment type="interaction">
    <interactant intactId="EBI-2880706">
        <id>O43593</id>
    </interactant>
    <interactant intactId="EBI-12290641">
        <id>O43610</id>
        <label>SPRY3</label>
    </interactant>
    <organismsDiffer>false</organismsDiffer>
    <experiments>3</experiments>
</comment>
<comment type="interaction">
    <interactant intactId="EBI-2880706">
        <id>O43593</id>
    </interactant>
    <interactant intactId="EBI-12806590">
        <id>Q86WV8</id>
        <label>TSC1</label>
    </interactant>
    <organismsDiffer>false</organismsDiffer>
    <experiments>3</experiments>
</comment>
<comment type="interaction">
    <interactant intactId="EBI-2880706">
        <id>O43593</id>
    </interactant>
    <interactant intactId="EBI-12030590">
        <id>Q9H0C1</id>
        <label>ZMYND12</label>
    </interactant>
    <organismsDiffer>false</organismsDiffer>
    <experiments>3</experiments>
</comment>
<comment type="subcellular location">
    <subcellularLocation>
        <location>Nucleus</location>
    </subcellularLocation>
</comment>
<comment type="alternative products">
    <event type="alternative splicing"/>
    <isoform>
        <id>O43593-1</id>
        <name>1</name>
        <name>Long</name>
        <sequence type="displayed"/>
    </isoform>
    <isoform>
        <id>O43593-2</id>
        <name>2</name>
        <name>Short</name>
        <sequence type="described" ref="VSP_004276"/>
    </isoform>
    <text>Additional isoforms seem to exist.</text>
</comment>
<comment type="tissue specificity">
    <text evidence="4 12">Strongest expression of isoforms 1 and 2 is seen in the small intestine, weaker expression in brain and colon, and trace expression is found in liver, pancreas, spleen, thymus, stomach, salivary gland, appendix and trachea. Isoform 1 is always the most abundant. Isoform 1 is exclusively expressed at low levels in kidney and testis. Isoform 2 is exclusively expressed at high levels in the skin.</text>
</comment>
<comment type="domain">
    <text evidence="1">Contains two Leu-Xaa-Xaa-Leu-Leu (LXXLL) motifs. The LXXLL motifs are essential for the association with nuclear receptors (By similarity).</text>
</comment>
<comment type="domain">
    <text evidence="1">The JmjC domain and the C6-type zinc-finger are required for the demethylation activity.</text>
</comment>
<comment type="disease" evidence="6 9 11 12">
    <disease id="DI-00078">
        <name>Alopecia universalis congenita</name>
        <acronym>ALUNC</acronym>
        <description>A rare disorder characterized by loss of hair from the entire body. No hair are present in hair follicles on skin biopsy.</description>
        <dbReference type="MIM" id="203655"/>
    </disease>
    <text>The disease is caused by variants affecting the gene represented in this entry.</text>
</comment>
<comment type="disease">
    <disease id="DI-00154">
        <name>Atrichia with papular lesions</name>
        <acronym>APL</acronym>
        <description>An autosomal recessive disease characterized by papillary lesions over most of the body and almost complete absence of hair.</description>
        <dbReference type="MIM" id="209500"/>
    </disease>
    <text>The disease is caused by variants affecting the gene represented in this entry.</text>
</comment>
<comment type="disease" evidence="8 10">
    <disease id="DI-02514">
        <name>Hypotrichosis 4</name>
        <acronym>HYPT4</acronym>
        <description>An autosomal dominant condition characterized by reduced amount of hair, alopecia, little or no eyebrows, eyelashes or body hair, and coarse, wiry, twisted hair in early childhood.</description>
        <dbReference type="MIM" id="146550"/>
    </disease>
    <text>The disease is caused by variants affecting the gene represented in this entry.</text>
</comment>
<protein>
    <recommendedName>
        <fullName>Lysine-specific demethylase hairless</fullName>
        <ecNumber evidence="9">1.14.11.65</ecNumber>
    </recommendedName>
    <alternativeName>
        <fullName evidence="15">[histone H3]-dimethyl-L-lysine(9) demethylase hairless</fullName>
    </alternativeName>
</protein>